<organism>
    <name type="scientific">Pseudomonas fluorescens (strain Pf0-1)</name>
    <dbReference type="NCBI Taxonomy" id="205922"/>
    <lineage>
        <taxon>Bacteria</taxon>
        <taxon>Pseudomonadati</taxon>
        <taxon>Pseudomonadota</taxon>
        <taxon>Gammaproteobacteria</taxon>
        <taxon>Pseudomonadales</taxon>
        <taxon>Pseudomonadaceae</taxon>
        <taxon>Pseudomonas</taxon>
    </lineage>
</organism>
<keyword id="KW-0012">Acyltransferase</keyword>
<keyword id="KW-0963">Cytoplasm</keyword>
<keyword id="KW-0808">Transferase</keyword>
<protein>
    <recommendedName>
        <fullName evidence="1">Octanoyltransferase</fullName>
        <ecNumber evidence="1">2.3.1.181</ecNumber>
    </recommendedName>
    <alternativeName>
        <fullName evidence="1">Lipoate-protein ligase B</fullName>
    </alternativeName>
    <alternativeName>
        <fullName evidence="1">Lipoyl/octanoyl transferase</fullName>
    </alternativeName>
    <alternativeName>
        <fullName evidence="1">Octanoyl-[acyl-carrier-protein]-protein N-octanoyltransferase</fullName>
    </alternativeName>
</protein>
<gene>
    <name evidence="1" type="primary">lipB</name>
    <name type="ordered locus">Pfl01_4964</name>
</gene>
<name>LIPB_PSEPF</name>
<feature type="chain" id="PRO_0000242747" description="Octanoyltransferase">
    <location>
        <begin position="1"/>
        <end position="215"/>
    </location>
</feature>
<feature type="domain" description="BPL/LPL catalytic" evidence="2">
    <location>
        <begin position="31"/>
        <end position="206"/>
    </location>
</feature>
<feature type="active site" description="Acyl-thioester intermediate" evidence="1">
    <location>
        <position position="168"/>
    </location>
</feature>
<feature type="binding site" evidence="1">
    <location>
        <begin position="70"/>
        <end position="77"/>
    </location>
    <ligand>
        <name>substrate</name>
    </ligand>
</feature>
<feature type="binding site" evidence="1">
    <location>
        <begin position="137"/>
        <end position="139"/>
    </location>
    <ligand>
        <name>substrate</name>
    </ligand>
</feature>
<feature type="binding site" evidence="1">
    <location>
        <begin position="150"/>
        <end position="152"/>
    </location>
    <ligand>
        <name>substrate</name>
    </ligand>
</feature>
<feature type="site" description="Lowers pKa of active site Cys" evidence="1">
    <location>
        <position position="134"/>
    </location>
</feature>
<dbReference type="EC" id="2.3.1.181" evidence="1"/>
<dbReference type="EMBL" id="CP000094">
    <property type="protein sequence ID" value="ABA76701.1"/>
    <property type="molecule type" value="Genomic_DNA"/>
</dbReference>
<dbReference type="RefSeq" id="WP_011336093.1">
    <property type="nucleotide sequence ID" value="NC_007492.2"/>
</dbReference>
<dbReference type="SMR" id="Q3K6A3"/>
<dbReference type="KEGG" id="pfo:Pfl01_4964"/>
<dbReference type="eggNOG" id="COG0321">
    <property type="taxonomic scope" value="Bacteria"/>
</dbReference>
<dbReference type="HOGENOM" id="CLU_035168_3_1_6"/>
<dbReference type="UniPathway" id="UPA00538">
    <property type="reaction ID" value="UER00592"/>
</dbReference>
<dbReference type="Proteomes" id="UP000002704">
    <property type="component" value="Chromosome"/>
</dbReference>
<dbReference type="GO" id="GO:0005737">
    <property type="term" value="C:cytoplasm"/>
    <property type="evidence" value="ECO:0007669"/>
    <property type="project" value="UniProtKB-SubCell"/>
</dbReference>
<dbReference type="GO" id="GO:0033819">
    <property type="term" value="F:lipoyl(octanoyl) transferase activity"/>
    <property type="evidence" value="ECO:0007669"/>
    <property type="project" value="UniProtKB-EC"/>
</dbReference>
<dbReference type="GO" id="GO:0036211">
    <property type="term" value="P:protein modification process"/>
    <property type="evidence" value="ECO:0007669"/>
    <property type="project" value="InterPro"/>
</dbReference>
<dbReference type="CDD" id="cd16444">
    <property type="entry name" value="LipB"/>
    <property type="match status" value="1"/>
</dbReference>
<dbReference type="FunFam" id="3.30.930.10:FF:000020">
    <property type="entry name" value="Octanoyltransferase"/>
    <property type="match status" value="1"/>
</dbReference>
<dbReference type="Gene3D" id="3.30.930.10">
    <property type="entry name" value="Bira Bifunctional Protein, Domain 2"/>
    <property type="match status" value="1"/>
</dbReference>
<dbReference type="HAMAP" id="MF_00013">
    <property type="entry name" value="LipB"/>
    <property type="match status" value="1"/>
</dbReference>
<dbReference type="InterPro" id="IPR045864">
    <property type="entry name" value="aa-tRNA-synth_II/BPL/LPL"/>
</dbReference>
<dbReference type="InterPro" id="IPR004143">
    <property type="entry name" value="BPL_LPL_catalytic"/>
</dbReference>
<dbReference type="InterPro" id="IPR000544">
    <property type="entry name" value="Octanoyltransferase"/>
</dbReference>
<dbReference type="InterPro" id="IPR020605">
    <property type="entry name" value="Octanoyltransferase_CS"/>
</dbReference>
<dbReference type="NCBIfam" id="TIGR00214">
    <property type="entry name" value="lipB"/>
    <property type="match status" value="1"/>
</dbReference>
<dbReference type="NCBIfam" id="NF010922">
    <property type="entry name" value="PRK14342.1"/>
    <property type="match status" value="1"/>
</dbReference>
<dbReference type="PANTHER" id="PTHR10993:SF7">
    <property type="entry name" value="LIPOYLTRANSFERASE 2, MITOCHONDRIAL-RELATED"/>
    <property type="match status" value="1"/>
</dbReference>
<dbReference type="PANTHER" id="PTHR10993">
    <property type="entry name" value="OCTANOYLTRANSFERASE"/>
    <property type="match status" value="1"/>
</dbReference>
<dbReference type="Pfam" id="PF21948">
    <property type="entry name" value="LplA-B_cat"/>
    <property type="match status" value="1"/>
</dbReference>
<dbReference type="PIRSF" id="PIRSF016262">
    <property type="entry name" value="LPLase"/>
    <property type="match status" value="1"/>
</dbReference>
<dbReference type="SUPFAM" id="SSF55681">
    <property type="entry name" value="Class II aaRS and biotin synthetases"/>
    <property type="match status" value="1"/>
</dbReference>
<dbReference type="PROSITE" id="PS51733">
    <property type="entry name" value="BPL_LPL_CATALYTIC"/>
    <property type="match status" value="1"/>
</dbReference>
<dbReference type="PROSITE" id="PS01313">
    <property type="entry name" value="LIPB"/>
    <property type="match status" value="1"/>
</dbReference>
<comment type="function">
    <text evidence="1">Catalyzes the transfer of endogenously produced octanoic acid from octanoyl-acyl-carrier-protein onto the lipoyl domains of lipoate-dependent enzymes. Lipoyl-ACP can also act as a substrate although octanoyl-ACP is likely to be the physiological substrate.</text>
</comment>
<comment type="catalytic activity">
    <reaction evidence="1">
        <text>octanoyl-[ACP] + L-lysyl-[protein] = N(6)-octanoyl-L-lysyl-[protein] + holo-[ACP] + H(+)</text>
        <dbReference type="Rhea" id="RHEA:17665"/>
        <dbReference type="Rhea" id="RHEA-COMP:9636"/>
        <dbReference type="Rhea" id="RHEA-COMP:9685"/>
        <dbReference type="Rhea" id="RHEA-COMP:9752"/>
        <dbReference type="Rhea" id="RHEA-COMP:9928"/>
        <dbReference type="ChEBI" id="CHEBI:15378"/>
        <dbReference type="ChEBI" id="CHEBI:29969"/>
        <dbReference type="ChEBI" id="CHEBI:64479"/>
        <dbReference type="ChEBI" id="CHEBI:78463"/>
        <dbReference type="ChEBI" id="CHEBI:78809"/>
        <dbReference type="EC" id="2.3.1.181"/>
    </reaction>
</comment>
<comment type="pathway">
    <text evidence="1">Protein modification; protein lipoylation via endogenous pathway; protein N(6)-(lipoyl)lysine from octanoyl-[acyl-carrier-protein]: step 1/2.</text>
</comment>
<comment type="subcellular location">
    <subcellularLocation>
        <location evidence="1">Cytoplasm</location>
    </subcellularLocation>
</comment>
<comment type="miscellaneous">
    <text evidence="1">In the reaction, the free carboxyl group of octanoic acid is attached via an amide linkage to the epsilon-amino group of a specific lysine residue of lipoyl domains of lipoate-dependent enzymes.</text>
</comment>
<comment type="similarity">
    <text evidence="1">Belongs to the LipB family.</text>
</comment>
<evidence type="ECO:0000255" key="1">
    <source>
        <dbReference type="HAMAP-Rule" id="MF_00013"/>
    </source>
</evidence>
<evidence type="ECO:0000255" key="2">
    <source>
        <dbReference type="PROSITE-ProRule" id="PRU01067"/>
    </source>
</evidence>
<proteinExistence type="inferred from homology"/>
<accession>Q3K6A3</accession>
<sequence>MPGTLGFRELGQMAYEPVWQAMQRFTNERGTTAPDEIWLVEHPPVFTQGQAGKAEHLLLPGDIPVVQVDRGGQVTYHGPGQLVAYLLLDVRRLGFGVRDLVSRMERCLIELLASYGVTAVAKPDAPGVYIDGAKIASLGLRIRHGCSFHGLALNVDMNLEPFRRINPCGYAGLAMTQLSEHAGSIEFAEVSARLRAQLVKHLDYAEQTTLTGGID</sequence>
<reference key="1">
    <citation type="journal article" date="2009" name="Genome Biol.">
        <title>Genomic and genetic analyses of diversity and plant interactions of Pseudomonas fluorescens.</title>
        <authorList>
            <person name="Silby M.W."/>
            <person name="Cerdeno-Tarraga A.M."/>
            <person name="Vernikos G.S."/>
            <person name="Giddens S.R."/>
            <person name="Jackson R.W."/>
            <person name="Preston G.M."/>
            <person name="Zhang X.-X."/>
            <person name="Moon C.D."/>
            <person name="Gehrig S.M."/>
            <person name="Godfrey S.A.C."/>
            <person name="Knight C.G."/>
            <person name="Malone J.G."/>
            <person name="Robinson Z."/>
            <person name="Spiers A.J."/>
            <person name="Harris S."/>
            <person name="Challis G.L."/>
            <person name="Yaxley A.M."/>
            <person name="Harris D."/>
            <person name="Seeger K."/>
            <person name="Murphy L."/>
            <person name="Rutter S."/>
            <person name="Squares R."/>
            <person name="Quail M.A."/>
            <person name="Saunders E."/>
            <person name="Mavromatis K."/>
            <person name="Brettin T.S."/>
            <person name="Bentley S.D."/>
            <person name="Hothersall J."/>
            <person name="Stephens E."/>
            <person name="Thomas C.M."/>
            <person name="Parkhill J."/>
            <person name="Levy S.B."/>
            <person name="Rainey P.B."/>
            <person name="Thomson N.R."/>
        </authorList>
    </citation>
    <scope>NUCLEOTIDE SEQUENCE [LARGE SCALE GENOMIC DNA]</scope>
    <source>
        <strain>Pf0-1</strain>
    </source>
</reference>